<evidence type="ECO:0000255" key="1">
    <source>
        <dbReference type="HAMAP-Rule" id="MF_01338"/>
    </source>
</evidence>
<evidence type="ECO:0000269" key="2">
    <source>
    </source>
</evidence>
<evidence type="ECO:0000269" key="3">
    <source ref="3"/>
</evidence>
<evidence type="ECO:0000303" key="4">
    <source>
    </source>
</evidence>
<evidence type="ECO:0000305" key="5"/>
<evidence type="ECO:0000305" key="6">
    <source>
    </source>
</evidence>
<organism>
    <name type="scientific">Hydrogenovibrio marinus</name>
    <dbReference type="NCBI Taxonomy" id="28885"/>
    <lineage>
        <taxon>Bacteria</taxon>
        <taxon>Pseudomonadati</taxon>
        <taxon>Pseudomonadota</taxon>
        <taxon>Gammaproteobacteria</taxon>
        <taxon>Thiotrichales</taxon>
        <taxon>Piscirickettsiaceae</taxon>
        <taxon>Hydrogenovibrio</taxon>
    </lineage>
</organism>
<sequence>MAKTYNAGVKEYRETYWMPEYEPKDSDFLACFKVVPQPGVPREEIAAAVAAESSTGTWTTVWTDLLTDLDYYKGRAYRIEDVPGDDSAFYAFIAYPIDLFEEGSIVSVMTSLVGNVFGFKALRSIRLEDIRFPLAYVMTCGGPPHGIQVERDKMDKYGRPMLGCTIKPKLGLSAKNYGRAVYECLRGGLDFTKDDENVTSQPFMRWRDRFLFCQDAIEKAQDETGERTGHYLNATAGTPEEMYERAEFAKEIGSPIVMHDFLTGGLTANTGLANYCRKNGLLLHIHRAMHGVIDRNPLHGIHFRVLSKVLRLSGGDHLHSGTVVGKLEGDRGSDLGWIDIMRDSFIAEDRSRGIMFDQDFGEMPGVIPVASGGIHVWHMPALVAIFGDDSVLQFGGGTIGHPWGNAVGAAVNLVALEACVQARNEGQEIEKNGKEILTNDGKHSPELKIAMETWKEIKFEFDTVDKLDLSHK</sequence>
<name>RBL1A_HYDMR</name>
<reference key="1">
    <citation type="journal article" date="1998" name="Arch. Microbiol.">
        <title>Phylogenetic position of an obligately chemoautotrophic, marine hydrogen-oxidizing bacterium, Hydrogenovibrio marinus, on the basis of 16S rRNA gene sequences and two form I RuBisCO gene sequences.</title>
        <authorList>
            <person name="Nishihara H."/>
            <person name="Yaguchi T."/>
            <person name="Chung S.-Y."/>
            <person name="Suzuki K."/>
            <person name="Yanagi M."/>
            <person name="Yamasato K."/>
            <person name="Kodama T."/>
            <person name="Igarashi Y."/>
        </authorList>
    </citation>
    <scope>NUCLEOTIDE SEQUENCE [GENOMIC DNA]</scope>
    <scope>EXPRESSION IN E.COLI</scope>
    <source>
        <strain>DSM 11271 / JCM 7688 / MH-110</strain>
    </source>
</reference>
<reference key="2">
    <citation type="journal article" date="2004" name="J. Bacteriol.">
        <title>CO2-responsive expression and gene organization of three ribulose-1,5-bisphosphate carboxylase/oxygenase enzymes and carboxysomes in Hydrogenovibrio marinus strain MH-110.</title>
        <authorList>
            <person name="Yoshizawa Y."/>
            <person name="Toyoda K."/>
            <person name="Arai H."/>
            <person name="Ishii M."/>
            <person name="Igarashi Y."/>
        </authorList>
    </citation>
    <scope>NUCLEOTIDE SEQUENCE [GENOMIC DNA]</scope>
    <scope>INDUCTION OF EXPRESSION BY CO(2) IN H.MARINUS</scope>
    <source>
        <strain>DSM 11271 / JCM 7688 / MH-110</strain>
    </source>
</reference>
<reference key="3">
    <citation type="journal article" date="1998" name="J. Ferment. Bioeng.">
        <title>Different properties of gene products of three sets ribulose 1,5-bisphosphate carboxylase/oxygenase from a marine obligately autotrophic hydrogen-oxidizing bacterium, Hydrogenovibrio marinus strain MH-110.</title>
        <authorList>
            <person name="Hayashi N.R."/>
            <person name="Oguni A."/>
            <person name="Yaguchi T."/>
            <person name="Chung S.-Y."/>
            <person name="Nishihara H."/>
            <person name="Kodama T."/>
            <person name="Igarashi Y."/>
        </authorList>
    </citation>
    <scope>CHARACTERIZATION IN E.COLI</scope>
    <scope>FUNCTION</scope>
    <scope>BIOPHYSICOCHEMICAL PROPERTIES</scope>
    <scope>SUBUNIT</scope>
    <source>
        <strain>DSM 11271 / JCM 7688 / MH-110</strain>
    </source>
</reference>
<protein>
    <recommendedName>
        <fullName evidence="1">Ribulose bisphosphate carboxylase large chain 1</fullName>
        <shortName evidence="1">RuBisCO large subunit 1</shortName>
        <ecNumber evidence="1">4.1.1.39</ecNumber>
    </recommendedName>
</protein>
<keyword id="KW-0113">Calvin cycle</keyword>
<keyword id="KW-0120">Carbon dioxide fixation</keyword>
<keyword id="KW-0456">Lyase</keyword>
<keyword id="KW-0460">Magnesium</keyword>
<keyword id="KW-0479">Metal-binding</keyword>
<keyword id="KW-0503">Monooxygenase</keyword>
<keyword id="KW-0560">Oxidoreductase</keyword>
<accession>Q59458</accession>
<accession>Q75W45</accession>
<feature type="chain" id="PRO_0000062624" description="Ribulose bisphosphate carboxylase large chain 1">
    <location>
        <begin position="1"/>
        <end position="472"/>
    </location>
</feature>
<feature type="active site" description="Proton acceptor" evidence="1">
    <location>
        <position position="167"/>
    </location>
</feature>
<feature type="active site" description="Proton acceptor" evidence="1">
    <location>
        <position position="286"/>
    </location>
</feature>
<feature type="binding site" description="in homodimeric partner" evidence="1">
    <location>
        <position position="115"/>
    </location>
    <ligand>
        <name>substrate</name>
    </ligand>
</feature>
<feature type="binding site" evidence="1">
    <location>
        <position position="165"/>
    </location>
    <ligand>
        <name>substrate</name>
    </ligand>
</feature>
<feature type="binding site" evidence="1">
    <location>
        <position position="169"/>
    </location>
    <ligand>
        <name>substrate</name>
    </ligand>
</feature>
<feature type="binding site" description="via carbamate group" evidence="1">
    <location>
        <position position="193"/>
    </location>
    <ligand>
        <name>Mg(2+)</name>
        <dbReference type="ChEBI" id="CHEBI:18420"/>
    </ligand>
</feature>
<feature type="binding site" evidence="1">
    <location>
        <position position="195"/>
    </location>
    <ligand>
        <name>Mg(2+)</name>
        <dbReference type="ChEBI" id="CHEBI:18420"/>
    </ligand>
</feature>
<feature type="binding site" evidence="1">
    <location>
        <position position="196"/>
    </location>
    <ligand>
        <name>Mg(2+)</name>
        <dbReference type="ChEBI" id="CHEBI:18420"/>
    </ligand>
</feature>
<feature type="binding site" evidence="1">
    <location>
        <position position="287"/>
    </location>
    <ligand>
        <name>substrate</name>
    </ligand>
</feature>
<feature type="binding site" evidence="1">
    <location>
        <position position="319"/>
    </location>
    <ligand>
        <name>substrate</name>
    </ligand>
</feature>
<feature type="binding site" evidence="1">
    <location>
        <position position="371"/>
    </location>
    <ligand>
        <name>substrate</name>
    </ligand>
</feature>
<feature type="site" description="Transition state stabilizer" evidence="1">
    <location>
        <position position="326"/>
    </location>
</feature>
<feature type="modified residue" description="N6-carboxylysine" evidence="1">
    <location>
        <position position="193"/>
    </location>
</feature>
<feature type="sequence conflict" description="In Ref. 2; BAD15307." evidence="5" ref="2">
    <original>L</original>
    <variation>M</variation>
    <location>
        <position position="298"/>
    </location>
</feature>
<feature type="sequence conflict" description="In Ref. 2; BAD15307." evidence="5" ref="2">
    <original>GSD</original>
    <variation>EAT</variation>
    <location>
        <begin position="332"/>
        <end position="334"/>
    </location>
</feature>
<feature type="sequence conflict" description="In Ref. 2; BAD15307." evidence="5" ref="2">
    <original>I</original>
    <variation>L</variation>
    <location>
        <position position="399"/>
    </location>
</feature>
<feature type="sequence conflict" description="In Ref. 2; BAD15307." evidence="5" ref="2">
    <original>V</original>
    <variation>A</variation>
    <location>
        <position position="407"/>
    </location>
</feature>
<feature type="sequence conflict" description="In Ref. 2; BAD15307." evidence="5" ref="2">
    <original>VNL</original>
    <variation>ANR</variation>
    <location>
        <begin position="411"/>
        <end position="413"/>
    </location>
</feature>
<feature type="sequence conflict" description="In Ref. 2; BAD15307." evidence="5" ref="2">
    <original>DG</original>
    <variation>AA</variation>
    <location>
        <begin position="440"/>
        <end position="441"/>
    </location>
</feature>
<gene>
    <name evidence="1" type="primary">cbbL1</name>
    <name evidence="4" type="synonym">cbbL-1</name>
</gene>
<dbReference type="EC" id="4.1.1.39" evidence="1"/>
<dbReference type="EMBL" id="D43621">
    <property type="protein sequence ID" value="BAA07729.1"/>
    <property type="molecule type" value="Genomic_DNA"/>
</dbReference>
<dbReference type="EMBL" id="AB122069">
    <property type="protein sequence ID" value="BAD15307.1"/>
    <property type="molecule type" value="Genomic_DNA"/>
</dbReference>
<dbReference type="SMR" id="Q59458"/>
<dbReference type="STRING" id="28885.EI16_08840"/>
<dbReference type="GO" id="GO:0000287">
    <property type="term" value="F:magnesium ion binding"/>
    <property type="evidence" value="ECO:0007669"/>
    <property type="project" value="UniProtKB-UniRule"/>
</dbReference>
<dbReference type="GO" id="GO:0004497">
    <property type="term" value="F:monooxygenase activity"/>
    <property type="evidence" value="ECO:0007669"/>
    <property type="project" value="UniProtKB-KW"/>
</dbReference>
<dbReference type="GO" id="GO:0016984">
    <property type="term" value="F:ribulose-bisphosphate carboxylase activity"/>
    <property type="evidence" value="ECO:0007669"/>
    <property type="project" value="UniProtKB-UniRule"/>
</dbReference>
<dbReference type="GO" id="GO:0019253">
    <property type="term" value="P:reductive pentose-phosphate cycle"/>
    <property type="evidence" value="ECO:0007669"/>
    <property type="project" value="UniProtKB-UniRule"/>
</dbReference>
<dbReference type="Gene3D" id="3.20.20.110">
    <property type="entry name" value="Ribulose bisphosphate carboxylase, large subunit, C-terminal domain"/>
    <property type="match status" value="1"/>
</dbReference>
<dbReference type="Gene3D" id="3.30.70.150">
    <property type="entry name" value="RuBisCO large subunit, N-terminal domain"/>
    <property type="match status" value="1"/>
</dbReference>
<dbReference type="HAMAP" id="MF_01338">
    <property type="entry name" value="RuBisCO_L_type1"/>
    <property type="match status" value="1"/>
</dbReference>
<dbReference type="InterPro" id="IPR033966">
    <property type="entry name" value="RuBisCO"/>
</dbReference>
<dbReference type="InterPro" id="IPR020878">
    <property type="entry name" value="RuBisCo_large_chain_AS"/>
</dbReference>
<dbReference type="InterPro" id="IPR000685">
    <property type="entry name" value="RuBisCO_lsu_C"/>
</dbReference>
<dbReference type="InterPro" id="IPR036376">
    <property type="entry name" value="RuBisCO_lsu_C_sf"/>
</dbReference>
<dbReference type="InterPro" id="IPR017443">
    <property type="entry name" value="RuBisCO_lsu_fd_N"/>
</dbReference>
<dbReference type="InterPro" id="IPR036422">
    <property type="entry name" value="RuBisCO_lsu_N_sf"/>
</dbReference>
<dbReference type="InterPro" id="IPR020888">
    <property type="entry name" value="RuBisCO_lsuI"/>
</dbReference>
<dbReference type="NCBIfam" id="NF003252">
    <property type="entry name" value="PRK04208.1"/>
    <property type="match status" value="1"/>
</dbReference>
<dbReference type="PANTHER" id="PTHR42704">
    <property type="entry name" value="RIBULOSE BISPHOSPHATE CARBOXYLASE"/>
    <property type="match status" value="1"/>
</dbReference>
<dbReference type="PANTHER" id="PTHR42704:SF17">
    <property type="entry name" value="RIBULOSE BISPHOSPHATE CARBOXYLASE LARGE CHAIN"/>
    <property type="match status" value="1"/>
</dbReference>
<dbReference type="Pfam" id="PF00016">
    <property type="entry name" value="RuBisCO_large"/>
    <property type="match status" value="1"/>
</dbReference>
<dbReference type="Pfam" id="PF02788">
    <property type="entry name" value="RuBisCO_large_N"/>
    <property type="match status" value="1"/>
</dbReference>
<dbReference type="SFLD" id="SFLDG01052">
    <property type="entry name" value="RuBisCO"/>
    <property type="match status" value="1"/>
</dbReference>
<dbReference type="SFLD" id="SFLDS00014">
    <property type="entry name" value="RuBisCO"/>
    <property type="match status" value="1"/>
</dbReference>
<dbReference type="SFLD" id="SFLDG00301">
    <property type="entry name" value="RuBisCO-like_proteins"/>
    <property type="match status" value="1"/>
</dbReference>
<dbReference type="SUPFAM" id="SSF51649">
    <property type="entry name" value="RuBisCo, C-terminal domain"/>
    <property type="match status" value="1"/>
</dbReference>
<dbReference type="SUPFAM" id="SSF54966">
    <property type="entry name" value="RuBisCO, large subunit, small (N-terminal) domain"/>
    <property type="match status" value="1"/>
</dbReference>
<dbReference type="PROSITE" id="PS00157">
    <property type="entry name" value="RUBISCO_LARGE"/>
    <property type="match status" value="1"/>
</dbReference>
<proteinExistence type="evidence at protein level"/>
<comment type="function">
    <text evidence="3">RuBisCO catalyzes two reactions: the carboxylation of D-ribulose 1,5-bisphosphate, the primary event in carbon dioxide fixation, as well as the oxidative fragmentation of the pentose substrate. Both reactions occur simultaneously and in competition at the same active site.</text>
</comment>
<comment type="catalytic activity">
    <reaction evidence="1 3">
        <text>2 (2R)-3-phosphoglycerate + 2 H(+) = D-ribulose 1,5-bisphosphate + CO2 + H2O</text>
        <dbReference type="Rhea" id="RHEA:23124"/>
        <dbReference type="ChEBI" id="CHEBI:15377"/>
        <dbReference type="ChEBI" id="CHEBI:15378"/>
        <dbReference type="ChEBI" id="CHEBI:16526"/>
        <dbReference type="ChEBI" id="CHEBI:57870"/>
        <dbReference type="ChEBI" id="CHEBI:58272"/>
        <dbReference type="EC" id="4.1.1.39"/>
    </reaction>
</comment>
<comment type="catalytic activity">
    <reaction evidence="1 3">
        <text>D-ribulose 1,5-bisphosphate + O2 = 2-phosphoglycolate + (2R)-3-phosphoglycerate + 2 H(+)</text>
        <dbReference type="Rhea" id="RHEA:36631"/>
        <dbReference type="ChEBI" id="CHEBI:15378"/>
        <dbReference type="ChEBI" id="CHEBI:15379"/>
        <dbReference type="ChEBI" id="CHEBI:57870"/>
        <dbReference type="ChEBI" id="CHEBI:58033"/>
        <dbReference type="ChEBI" id="CHEBI:58272"/>
    </reaction>
</comment>
<comment type="cofactor">
    <cofactor evidence="1">
        <name>Mg(2+)</name>
        <dbReference type="ChEBI" id="CHEBI:18420"/>
    </cofactor>
    <text evidence="1">Binds 1 Mg(2+) ion per subunit.</text>
</comment>
<comment type="biophysicochemical properties">
    <kinetics>
        <Vmax evidence="3">1.2 umol/min/mg enzyme with CO(2) as substrate, expressed in E.coli</Vmax>
        <text evidence="3">The CO(2)/O(2) specificity factor (tau) is 26.6.</text>
    </kinetics>
</comment>
<comment type="subunit">
    <text evidence="3 5">Heterohexadecamer of 8 large chains and 8 small chains.</text>
</comment>
<comment type="induction">
    <text evidence="2">Both mRNA and protein accumulate at 2% and 0.03% CO(2), but not at 15% or 0.15% CO(2) (at protein level).</text>
</comment>
<comment type="miscellaneous">
    <text evidence="1">The basic functional RuBisCO is composed of a large chain homodimer in a 'head-to-tail' conformation. In form I RuBisCO this homodimer is arranged in a barrel-like tetramer with the small subunits forming a tetrameric 'cap' on each end of the 'barrel'.</text>
</comment>
<comment type="similarity">
    <text evidence="1 6">Belongs to the RuBisCO large chain family. Type I subfamily.</text>
</comment>